<reference key="1">
    <citation type="journal article" date="2008" name="J. Bacteriol.">
        <title>Insights into plant cell wall degradation from the genome sequence of the soil bacterium Cellvibrio japonicus.</title>
        <authorList>
            <person name="DeBoy R.T."/>
            <person name="Mongodin E.F."/>
            <person name="Fouts D.E."/>
            <person name="Tailford L.E."/>
            <person name="Khouri H."/>
            <person name="Emerson J.B."/>
            <person name="Mohamoud Y."/>
            <person name="Watkins K."/>
            <person name="Henrissat B."/>
            <person name="Gilbert H.J."/>
            <person name="Nelson K.E."/>
        </authorList>
    </citation>
    <scope>NUCLEOTIDE SEQUENCE [LARGE SCALE GENOMIC DNA]</scope>
    <source>
        <strain>Ueda107</strain>
    </source>
</reference>
<gene>
    <name evidence="1" type="primary">ispG</name>
    <name type="ordered locus">CJA_1481</name>
</gene>
<accession>B3PDM1</accession>
<name>ISPG_CELJU</name>
<keyword id="KW-0004">4Fe-4S</keyword>
<keyword id="KW-0408">Iron</keyword>
<keyword id="KW-0411">Iron-sulfur</keyword>
<keyword id="KW-0414">Isoprene biosynthesis</keyword>
<keyword id="KW-0479">Metal-binding</keyword>
<keyword id="KW-0560">Oxidoreductase</keyword>
<keyword id="KW-1185">Reference proteome</keyword>
<evidence type="ECO:0000255" key="1">
    <source>
        <dbReference type="HAMAP-Rule" id="MF_00159"/>
    </source>
</evidence>
<dbReference type="EC" id="1.17.7.3" evidence="1"/>
<dbReference type="EMBL" id="CP000934">
    <property type="protein sequence ID" value="ACE82628.1"/>
    <property type="molecule type" value="Genomic_DNA"/>
</dbReference>
<dbReference type="RefSeq" id="WP_012487111.1">
    <property type="nucleotide sequence ID" value="NC_010995.1"/>
</dbReference>
<dbReference type="SMR" id="B3PDM1"/>
<dbReference type="STRING" id="498211.CJA_1481"/>
<dbReference type="KEGG" id="cja:CJA_1481"/>
<dbReference type="eggNOG" id="COG0821">
    <property type="taxonomic scope" value="Bacteria"/>
</dbReference>
<dbReference type="HOGENOM" id="CLU_042258_0_0_6"/>
<dbReference type="UniPathway" id="UPA00056">
    <property type="reaction ID" value="UER00096"/>
</dbReference>
<dbReference type="Proteomes" id="UP000001036">
    <property type="component" value="Chromosome"/>
</dbReference>
<dbReference type="GO" id="GO:0051539">
    <property type="term" value="F:4 iron, 4 sulfur cluster binding"/>
    <property type="evidence" value="ECO:0007669"/>
    <property type="project" value="UniProtKB-UniRule"/>
</dbReference>
<dbReference type="GO" id="GO:0046429">
    <property type="term" value="F:4-hydroxy-3-methylbut-2-en-1-yl diphosphate synthase activity (ferredoxin)"/>
    <property type="evidence" value="ECO:0007669"/>
    <property type="project" value="UniProtKB-UniRule"/>
</dbReference>
<dbReference type="GO" id="GO:0141197">
    <property type="term" value="F:4-hydroxy-3-methylbut-2-enyl-diphosphate synthase activity (flavodoxin)"/>
    <property type="evidence" value="ECO:0007669"/>
    <property type="project" value="UniProtKB-EC"/>
</dbReference>
<dbReference type="GO" id="GO:0005506">
    <property type="term" value="F:iron ion binding"/>
    <property type="evidence" value="ECO:0007669"/>
    <property type="project" value="InterPro"/>
</dbReference>
<dbReference type="GO" id="GO:0019288">
    <property type="term" value="P:isopentenyl diphosphate biosynthetic process, methylerythritol 4-phosphate pathway"/>
    <property type="evidence" value="ECO:0007669"/>
    <property type="project" value="UniProtKB-UniRule"/>
</dbReference>
<dbReference type="GO" id="GO:0016114">
    <property type="term" value="P:terpenoid biosynthetic process"/>
    <property type="evidence" value="ECO:0007669"/>
    <property type="project" value="InterPro"/>
</dbReference>
<dbReference type="FunFam" id="3.20.20.20:FF:000001">
    <property type="entry name" value="4-hydroxy-3-methylbut-2-en-1-yl diphosphate synthase (flavodoxin)"/>
    <property type="match status" value="1"/>
</dbReference>
<dbReference type="Gene3D" id="3.20.20.20">
    <property type="entry name" value="Dihydropteroate synthase-like"/>
    <property type="match status" value="1"/>
</dbReference>
<dbReference type="Gene3D" id="3.30.413.10">
    <property type="entry name" value="Sulfite Reductase Hemoprotein, domain 1"/>
    <property type="match status" value="1"/>
</dbReference>
<dbReference type="HAMAP" id="MF_00159">
    <property type="entry name" value="IspG"/>
    <property type="match status" value="1"/>
</dbReference>
<dbReference type="InterPro" id="IPR011005">
    <property type="entry name" value="Dihydropteroate_synth-like_sf"/>
</dbReference>
<dbReference type="InterPro" id="IPR016425">
    <property type="entry name" value="IspG_bac"/>
</dbReference>
<dbReference type="InterPro" id="IPR004588">
    <property type="entry name" value="IspG_bac-typ"/>
</dbReference>
<dbReference type="InterPro" id="IPR045854">
    <property type="entry name" value="NO2/SO3_Rdtase_4Fe4S_sf"/>
</dbReference>
<dbReference type="NCBIfam" id="TIGR00612">
    <property type="entry name" value="ispG_gcpE"/>
    <property type="match status" value="1"/>
</dbReference>
<dbReference type="NCBIfam" id="NF001540">
    <property type="entry name" value="PRK00366.1"/>
    <property type="match status" value="1"/>
</dbReference>
<dbReference type="PANTHER" id="PTHR30454">
    <property type="entry name" value="4-HYDROXY-3-METHYLBUT-2-EN-1-YL DIPHOSPHATE SYNTHASE"/>
    <property type="match status" value="1"/>
</dbReference>
<dbReference type="PANTHER" id="PTHR30454:SF0">
    <property type="entry name" value="4-HYDROXY-3-METHYLBUT-2-EN-1-YL DIPHOSPHATE SYNTHASE (FERREDOXIN), CHLOROPLASTIC"/>
    <property type="match status" value="1"/>
</dbReference>
<dbReference type="Pfam" id="PF04551">
    <property type="entry name" value="GcpE"/>
    <property type="match status" value="1"/>
</dbReference>
<dbReference type="PIRSF" id="PIRSF004640">
    <property type="entry name" value="IspG"/>
    <property type="match status" value="1"/>
</dbReference>
<dbReference type="SUPFAM" id="SSF51717">
    <property type="entry name" value="Dihydropteroate synthetase-like"/>
    <property type="match status" value="1"/>
</dbReference>
<dbReference type="SUPFAM" id="SSF56014">
    <property type="entry name" value="Nitrite and sulphite reductase 4Fe-4S domain-like"/>
    <property type="match status" value="1"/>
</dbReference>
<protein>
    <recommendedName>
        <fullName evidence="1">4-hydroxy-3-methylbut-2-en-1-yl diphosphate synthase (flavodoxin)</fullName>
        <ecNumber evidence="1">1.17.7.3</ecNumber>
    </recommendedName>
    <alternativeName>
        <fullName evidence="1">1-hydroxy-2-methyl-2-(E)-butenyl 4-diphosphate synthase</fullName>
    </alternativeName>
</protein>
<sequence>MHCESPIVRRKSRQIMVGNVPVGGGAPISVQSMTNTETTDVAATVEQIRRIQTAGADIVRVSVPTMEAAEAFGLIRKQVNIPLVADIHFDYRIALRVADLGVDCLRINPGNIGREKRIKAVVDKARDLNIPIRIGVNAGSLEKDLQKKYGEPTPDALVESALRHVEILDGLNFYNFKVSVKASDIFMAVAAYRKLAALIEQPLHLGITEAGGLRAGTVKSAIGLGALLMDGIGDTIRVSLAADPVEEIKVGWDMLRSLKIRSKGVNFIACPSCSRQNFDVIKTMNDLELRVEDITVPLDVAVIGCVVNGPGEAKEADLGLAGGTPSNLIYIDGEPSQKLTNENLVDNLERLIRAKAAQKQAQLEADAKNIIARA</sequence>
<organism>
    <name type="scientific">Cellvibrio japonicus (strain Ueda107)</name>
    <name type="common">Pseudomonas fluorescens subsp. cellulosa</name>
    <dbReference type="NCBI Taxonomy" id="498211"/>
    <lineage>
        <taxon>Bacteria</taxon>
        <taxon>Pseudomonadati</taxon>
        <taxon>Pseudomonadota</taxon>
        <taxon>Gammaproteobacteria</taxon>
        <taxon>Cellvibrionales</taxon>
        <taxon>Cellvibrionaceae</taxon>
        <taxon>Cellvibrio</taxon>
    </lineage>
</organism>
<comment type="function">
    <text evidence="1">Converts 2C-methyl-D-erythritol 2,4-cyclodiphosphate (ME-2,4cPP) into 1-hydroxy-2-methyl-2-(E)-butenyl 4-diphosphate.</text>
</comment>
<comment type="catalytic activity">
    <reaction evidence="1">
        <text>(2E)-4-hydroxy-3-methylbut-2-enyl diphosphate + oxidized [flavodoxin] + H2O + 2 H(+) = 2-C-methyl-D-erythritol 2,4-cyclic diphosphate + reduced [flavodoxin]</text>
        <dbReference type="Rhea" id="RHEA:43604"/>
        <dbReference type="Rhea" id="RHEA-COMP:10622"/>
        <dbReference type="Rhea" id="RHEA-COMP:10623"/>
        <dbReference type="ChEBI" id="CHEBI:15377"/>
        <dbReference type="ChEBI" id="CHEBI:15378"/>
        <dbReference type="ChEBI" id="CHEBI:57618"/>
        <dbReference type="ChEBI" id="CHEBI:58210"/>
        <dbReference type="ChEBI" id="CHEBI:58483"/>
        <dbReference type="ChEBI" id="CHEBI:128753"/>
        <dbReference type="EC" id="1.17.7.3"/>
    </reaction>
</comment>
<comment type="cofactor">
    <cofactor evidence="1">
        <name>[4Fe-4S] cluster</name>
        <dbReference type="ChEBI" id="CHEBI:49883"/>
    </cofactor>
    <text evidence="1">Binds 1 [4Fe-4S] cluster.</text>
</comment>
<comment type="pathway">
    <text evidence="1">Isoprenoid biosynthesis; isopentenyl diphosphate biosynthesis via DXP pathway; isopentenyl diphosphate from 1-deoxy-D-xylulose 5-phosphate: step 5/6.</text>
</comment>
<comment type="similarity">
    <text evidence="1">Belongs to the IspG family.</text>
</comment>
<feature type="chain" id="PRO_1000097153" description="4-hydroxy-3-methylbut-2-en-1-yl diphosphate synthase (flavodoxin)">
    <location>
        <begin position="1"/>
        <end position="374"/>
    </location>
</feature>
<feature type="binding site" evidence="1">
    <location>
        <position position="270"/>
    </location>
    <ligand>
        <name>[4Fe-4S] cluster</name>
        <dbReference type="ChEBI" id="CHEBI:49883"/>
    </ligand>
</feature>
<feature type="binding site" evidence="1">
    <location>
        <position position="273"/>
    </location>
    <ligand>
        <name>[4Fe-4S] cluster</name>
        <dbReference type="ChEBI" id="CHEBI:49883"/>
    </ligand>
</feature>
<feature type="binding site" evidence="1">
    <location>
        <position position="305"/>
    </location>
    <ligand>
        <name>[4Fe-4S] cluster</name>
        <dbReference type="ChEBI" id="CHEBI:49883"/>
    </ligand>
</feature>
<feature type="binding site" evidence="1">
    <location>
        <position position="312"/>
    </location>
    <ligand>
        <name>[4Fe-4S] cluster</name>
        <dbReference type="ChEBI" id="CHEBI:49883"/>
    </ligand>
</feature>
<proteinExistence type="inferred from homology"/>